<name>PBP2_NEIMB</name>
<reference key="1">
    <citation type="journal article" date="1989" name="Nucleic Acids Res.">
        <title>Nucleotide sequence of the penicillin-binding protein 2 gene of Neisseria meningitidis.</title>
        <authorList>
            <person name="Xhang Q.-Y."/>
            <person name="Spratt B.G."/>
        </authorList>
    </citation>
    <scope>NUCLEOTIDE SEQUENCE [GENOMIC DNA]</scope>
    <source>
        <strain>C311 / Serogroup B</strain>
    </source>
</reference>
<reference key="2">
    <citation type="journal article" date="2000" name="Science">
        <title>Complete genome sequence of Neisseria meningitidis serogroup B strain MC58.</title>
        <authorList>
            <person name="Tettelin H."/>
            <person name="Saunders N.J."/>
            <person name="Heidelberg J.F."/>
            <person name="Jeffries A.C."/>
            <person name="Nelson K.E."/>
            <person name="Eisen J.A."/>
            <person name="Ketchum K.A."/>
            <person name="Hood D.W."/>
            <person name="Peden J.F."/>
            <person name="Dodson R.J."/>
            <person name="Nelson W.C."/>
            <person name="Gwinn M.L."/>
            <person name="DeBoy R.T."/>
            <person name="Peterson J.D."/>
            <person name="Hickey E.K."/>
            <person name="Haft D.H."/>
            <person name="Salzberg S.L."/>
            <person name="White O."/>
            <person name="Fleischmann R.D."/>
            <person name="Dougherty B.A."/>
            <person name="Mason T.M."/>
            <person name="Ciecko A."/>
            <person name="Parksey D.S."/>
            <person name="Blair E."/>
            <person name="Cittone H."/>
            <person name="Clark E.B."/>
            <person name="Cotton M.D."/>
            <person name="Utterback T.R."/>
            <person name="Khouri H.M."/>
            <person name="Qin H."/>
            <person name="Vamathevan J.J."/>
            <person name="Gill J."/>
            <person name="Scarlato V."/>
            <person name="Masignani V."/>
            <person name="Pizza M."/>
            <person name="Grandi G."/>
            <person name="Sun L."/>
            <person name="Smith H.O."/>
            <person name="Fraser C.M."/>
            <person name="Moxon E.R."/>
            <person name="Rappuoli R."/>
            <person name="Venter J.C."/>
        </authorList>
    </citation>
    <scope>NUCLEOTIDE SEQUENCE [LARGE SCALE GENOMIC DNA]</scope>
    <source>
        <strain>ATCC BAA-335 / MC58</strain>
    </source>
</reference>
<protein>
    <recommendedName>
        <fullName evidence="1">Probable peptidoglycan D,D-transpeptidase PenA</fullName>
        <ecNumber evidence="1">3.4.16.4</ecNumber>
    </recommendedName>
    <alternativeName>
        <fullName evidence="1">Penicillin-binding protein 2</fullName>
        <shortName evidence="1">PBP-2</shortName>
    </alternativeName>
</protein>
<evidence type="ECO:0000255" key="1">
    <source>
        <dbReference type="HAMAP-Rule" id="MF_02080"/>
    </source>
</evidence>
<dbReference type="EC" id="3.4.16.4" evidence="1"/>
<dbReference type="EMBL" id="X15276">
    <property type="protein sequence ID" value="CAA33347.1"/>
    <property type="molecule type" value="Genomic_DNA"/>
</dbReference>
<dbReference type="EMBL" id="AE002098">
    <property type="protein sequence ID" value="AAF40852.1"/>
    <property type="molecule type" value="Genomic_DNA"/>
</dbReference>
<dbReference type="PIR" id="S04857">
    <property type="entry name" value="S04857"/>
</dbReference>
<dbReference type="RefSeq" id="NP_273462.1">
    <property type="nucleotide sequence ID" value="NC_003112.2"/>
</dbReference>
<dbReference type="RefSeq" id="WP_002218783.1">
    <property type="nucleotide sequence ID" value="NC_003112.2"/>
</dbReference>
<dbReference type="SMR" id="P0A0U9"/>
<dbReference type="FunCoup" id="P0A0U9">
    <property type="interactions" value="184"/>
</dbReference>
<dbReference type="STRING" id="122586.NMB0413"/>
<dbReference type="MEROPS" id="X52.001"/>
<dbReference type="PaxDb" id="122586-NMB0413"/>
<dbReference type="DNASU" id="902529"/>
<dbReference type="KEGG" id="nme:NMB0413"/>
<dbReference type="PATRIC" id="fig|122586.8.peg.523"/>
<dbReference type="HOGENOM" id="CLU_009289_6_2_4"/>
<dbReference type="InParanoid" id="P0A0U9"/>
<dbReference type="OrthoDB" id="9789078at2"/>
<dbReference type="UniPathway" id="UPA00219"/>
<dbReference type="Proteomes" id="UP000000425">
    <property type="component" value="Chromosome"/>
</dbReference>
<dbReference type="GO" id="GO:0005886">
    <property type="term" value="C:plasma membrane"/>
    <property type="evidence" value="ECO:0000318"/>
    <property type="project" value="GO_Central"/>
</dbReference>
<dbReference type="GO" id="GO:0008658">
    <property type="term" value="F:penicillin binding"/>
    <property type="evidence" value="ECO:0000318"/>
    <property type="project" value="GO_Central"/>
</dbReference>
<dbReference type="GO" id="GO:0008955">
    <property type="term" value="F:peptidoglycan glycosyltransferase activity"/>
    <property type="evidence" value="ECO:0007669"/>
    <property type="project" value="InterPro"/>
</dbReference>
<dbReference type="GO" id="GO:0009002">
    <property type="term" value="F:serine-type D-Ala-D-Ala carboxypeptidase activity"/>
    <property type="evidence" value="ECO:0007669"/>
    <property type="project" value="UniProtKB-UniRule"/>
</dbReference>
<dbReference type="GO" id="GO:0071555">
    <property type="term" value="P:cell wall organization"/>
    <property type="evidence" value="ECO:0000318"/>
    <property type="project" value="GO_Central"/>
</dbReference>
<dbReference type="GO" id="GO:0000917">
    <property type="term" value="P:division septum assembly"/>
    <property type="evidence" value="ECO:0007669"/>
    <property type="project" value="UniProtKB-KW"/>
</dbReference>
<dbReference type="GO" id="GO:0043093">
    <property type="term" value="P:FtsZ-dependent cytokinesis"/>
    <property type="evidence" value="ECO:0007669"/>
    <property type="project" value="UniProtKB-UniRule"/>
</dbReference>
<dbReference type="GO" id="GO:0009252">
    <property type="term" value="P:peptidoglycan biosynthetic process"/>
    <property type="evidence" value="ECO:0007669"/>
    <property type="project" value="UniProtKB-UniRule"/>
</dbReference>
<dbReference type="GO" id="GO:0006508">
    <property type="term" value="P:proteolysis"/>
    <property type="evidence" value="ECO:0007669"/>
    <property type="project" value="UniProtKB-KW"/>
</dbReference>
<dbReference type="GO" id="GO:0008360">
    <property type="term" value="P:regulation of cell shape"/>
    <property type="evidence" value="ECO:0007669"/>
    <property type="project" value="UniProtKB-KW"/>
</dbReference>
<dbReference type="GO" id="GO:0046677">
    <property type="term" value="P:response to antibiotic"/>
    <property type="evidence" value="ECO:0007669"/>
    <property type="project" value="UniProtKB-KW"/>
</dbReference>
<dbReference type="Gene3D" id="1.10.150.770">
    <property type="match status" value="1"/>
</dbReference>
<dbReference type="Gene3D" id="3.30.450.330">
    <property type="match status" value="1"/>
</dbReference>
<dbReference type="Gene3D" id="3.40.710.10">
    <property type="entry name" value="DD-peptidase/beta-lactamase superfamily"/>
    <property type="match status" value="1"/>
</dbReference>
<dbReference type="Gene3D" id="3.90.1310.10">
    <property type="entry name" value="Penicillin-binding protein 2a (Domain 2)"/>
    <property type="match status" value="1"/>
</dbReference>
<dbReference type="HAMAP" id="MF_02080">
    <property type="entry name" value="FtsI_transpept"/>
    <property type="match status" value="1"/>
</dbReference>
<dbReference type="InterPro" id="IPR050515">
    <property type="entry name" value="Bact_Transpept/Beta-Lactamase"/>
</dbReference>
<dbReference type="InterPro" id="IPR012338">
    <property type="entry name" value="Beta-lactam/transpept-like"/>
</dbReference>
<dbReference type="InterPro" id="IPR037532">
    <property type="entry name" value="FtsI_transpept"/>
</dbReference>
<dbReference type="InterPro" id="IPR005311">
    <property type="entry name" value="PBP_dimer"/>
</dbReference>
<dbReference type="InterPro" id="IPR036138">
    <property type="entry name" value="PBP_dimer_sf"/>
</dbReference>
<dbReference type="InterPro" id="IPR001460">
    <property type="entry name" value="PCN-bd_Tpept"/>
</dbReference>
<dbReference type="PANTHER" id="PTHR30627">
    <property type="entry name" value="PEPTIDOGLYCAN D,D-TRANSPEPTIDASE"/>
    <property type="match status" value="1"/>
</dbReference>
<dbReference type="PANTHER" id="PTHR30627:SF1">
    <property type="entry name" value="PEPTIDOGLYCAN D,D-TRANSPEPTIDASE FTSI"/>
    <property type="match status" value="1"/>
</dbReference>
<dbReference type="Pfam" id="PF03717">
    <property type="entry name" value="PBP_dimer"/>
    <property type="match status" value="1"/>
</dbReference>
<dbReference type="Pfam" id="PF00905">
    <property type="entry name" value="Transpeptidase"/>
    <property type="match status" value="1"/>
</dbReference>
<dbReference type="SUPFAM" id="SSF56601">
    <property type="entry name" value="beta-lactamase/transpeptidase-like"/>
    <property type="match status" value="1"/>
</dbReference>
<dbReference type="SUPFAM" id="SSF56519">
    <property type="entry name" value="Penicillin binding protein dimerisation domain"/>
    <property type="match status" value="1"/>
</dbReference>
<accession>P0A0U9</accession>
<accession>P11882</accession>
<keyword id="KW-0046">Antibiotic resistance</keyword>
<keyword id="KW-0121">Carboxypeptidase</keyword>
<keyword id="KW-0131">Cell cycle</keyword>
<keyword id="KW-0132">Cell division</keyword>
<keyword id="KW-0997">Cell inner membrane</keyword>
<keyword id="KW-1003">Cell membrane</keyword>
<keyword id="KW-0133">Cell shape</keyword>
<keyword id="KW-0961">Cell wall biogenesis/degradation</keyword>
<keyword id="KW-0378">Hydrolase</keyword>
<keyword id="KW-0472">Membrane</keyword>
<keyword id="KW-0573">Peptidoglycan synthesis</keyword>
<keyword id="KW-0645">Protease</keyword>
<keyword id="KW-1185">Reference proteome</keyword>
<keyword id="KW-0717">Septation</keyword>
<keyword id="KW-0812">Transmembrane</keyword>
<keyword id="KW-1133">Transmembrane helix</keyword>
<sequence>MLIKSEYKPRMLPKEEQVKKPMTSNGRISFVLMAIAVLFAGLIARGLYLQTVTYNFLKEQGDNRIVRTQTLPATRGTVSDRNGAVLALSAPTESLFAVPKEMKEMPSAAQLERLSELVDVPVDVLRNKLEQKGKSFIWIKRQLDPKVAEEVKALGLENFVFEKELKRHYPMGNLFAHVIGFTDIDGKGQEGLELSLEDSLHGEDGAEVVLRDRQGNIVDSLDSPRNKAPKNGKDIILSLDQRIQTLAYEELNKAVEYHQAKAGTVVVLDARTGEILALANTPAYDPNRPGRADSEQRRNRAVTDMIEPGSAIKPFVIAKALDAGKTDLNERLNTQPYKIGPSPVRDTHVYPSLDVRGIMQKSSNVGTSKLSARFGAEEMYDFYHELGIGVRMHSGFPGETAGLLRNWRRWRPIEQATMSFGYGLQLSLLQLARAYTALTHDGVLLPVSFEKQAVAPQGKRIFKESTAREVRNLMVSVTEPGGTGTAGAVDGFDVGAKTGTARKFVNGRYADNKHIATFIGFAPAKNPRVIVAVTIDEPTAHGYYGGVVAGPPFKKIMGGSLNILGISPTKPLTAAAVKTPS</sequence>
<comment type="function">
    <text evidence="1">Catalyzes cross-linking of the peptidoglycan cell wall at the division septum.</text>
</comment>
<comment type="catalytic activity">
    <reaction evidence="1">
        <text>Preferential cleavage: (Ac)2-L-Lys-D-Ala-|-D-Ala. Also transpeptidation of peptidyl-alanyl moieties that are N-acyl substituents of D-alanine.</text>
        <dbReference type="EC" id="3.4.16.4"/>
    </reaction>
</comment>
<comment type="pathway">
    <text evidence="1">Cell wall biogenesis; peptidoglycan biosynthesis.</text>
</comment>
<comment type="subcellular location">
    <subcellularLocation>
        <location evidence="1">Cell inner membrane</location>
        <topology evidence="1">Single-pass membrane protein</topology>
    </subcellularLocation>
</comment>
<comment type="domain">
    <text>The enzyme has an N-terminal penicillin insensitive transglycosylase domain (formation of linear glycan strands) and a C-terminal penicillin-sensitive transpeptidase domain (cross-linking of the peptide subunits).</text>
</comment>
<comment type="similarity">
    <text evidence="1">Belongs to the transpeptidase family. FtsI subfamily.</text>
</comment>
<organism>
    <name type="scientific">Neisseria meningitidis serogroup B (strain ATCC BAA-335 / MC58)</name>
    <dbReference type="NCBI Taxonomy" id="122586"/>
    <lineage>
        <taxon>Bacteria</taxon>
        <taxon>Pseudomonadati</taxon>
        <taxon>Pseudomonadota</taxon>
        <taxon>Betaproteobacteria</taxon>
        <taxon>Neisseriales</taxon>
        <taxon>Neisseriaceae</taxon>
        <taxon>Neisseria</taxon>
    </lineage>
</organism>
<gene>
    <name evidence="1" type="primary">penA</name>
    <name type="ordered locus">NMB0413</name>
</gene>
<proteinExistence type="inferred from homology"/>
<feature type="chain" id="PRO_0000195452" description="Probable peptidoglycan D,D-transpeptidase PenA">
    <location>
        <begin position="1"/>
        <end position="581"/>
    </location>
</feature>
<feature type="transmembrane region" description="Helical" evidence="1">
    <location>
        <begin position="28"/>
        <end position="48"/>
    </location>
</feature>
<feature type="active site" description="Acyl-ester intermediate" evidence="1">
    <location>
        <position position="310"/>
    </location>
</feature>